<feature type="chain" id="PRO_1000137460" description="Phosphatidylglycerol--prolipoprotein diacylglyceryl transferase">
    <location>
        <begin position="1"/>
        <end position="259"/>
    </location>
</feature>
<feature type="transmembrane region" description="Helical" evidence="1">
    <location>
        <begin position="12"/>
        <end position="32"/>
    </location>
</feature>
<feature type="transmembrane region" description="Helical" evidence="1">
    <location>
        <begin position="46"/>
        <end position="66"/>
    </location>
</feature>
<feature type="transmembrane region" description="Helical" evidence="1">
    <location>
        <begin position="83"/>
        <end position="103"/>
    </location>
</feature>
<feature type="transmembrane region" description="Helical" evidence="1">
    <location>
        <begin position="109"/>
        <end position="129"/>
    </location>
</feature>
<feature type="transmembrane region" description="Helical" evidence="1">
    <location>
        <begin position="167"/>
        <end position="187"/>
    </location>
</feature>
<feature type="transmembrane region" description="Helical" evidence="1">
    <location>
        <begin position="194"/>
        <end position="214"/>
    </location>
</feature>
<feature type="transmembrane region" description="Helical" evidence="1">
    <location>
        <begin position="226"/>
        <end position="246"/>
    </location>
</feature>
<feature type="binding site" evidence="1">
    <location>
        <position position="131"/>
    </location>
    <ligand>
        <name>a 1,2-diacyl-sn-glycero-3-phospho-(1'-sn-glycerol)</name>
        <dbReference type="ChEBI" id="CHEBI:64716"/>
    </ligand>
</feature>
<keyword id="KW-1003">Cell membrane</keyword>
<keyword id="KW-0472">Membrane</keyword>
<keyword id="KW-0808">Transferase</keyword>
<keyword id="KW-0812">Transmembrane</keyword>
<keyword id="KW-1133">Transmembrane helix</keyword>
<organism>
    <name type="scientific">Streptococcus equi subsp. zooepidemicus (strain MGCS10565)</name>
    <dbReference type="NCBI Taxonomy" id="552526"/>
    <lineage>
        <taxon>Bacteria</taxon>
        <taxon>Bacillati</taxon>
        <taxon>Bacillota</taxon>
        <taxon>Bacilli</taxon>
        <taxon>Lactobacillales</taxon>
        <taxon>Streptococcaceae</taxon>
        <taxon>Streptococcus</taxon>
    </lineage>
</organism>
<protein>
    <recommendedName>
        <fullName evidence="1">Phosphatidylglycerol--prolipoprotein diacylglyceryl transferase</fullName>
        <ecNumber evidence="1">2.5.1.145</ecNumber>
    </recommendedName>
</protein>
<evidence type="ECO:0000255" key="1">
    <source>
        <dbReference type="HAMAP-Rule" id="MF_01147"/>
    </source>
</evidence>
<comment type="function">
    <text evidence="1">Catalyzes the transfer of the diacylglyceryl group from phosphatidylglycerol to the sulfhydryl group of the N-terminal cysteine of a prolipoprotein, the first step in the formation of mature lipoproteins.</text>
</comment>
<comment type="catalytic activity">
    <reaction evidence="1">
        <text>L-cysteinyl-[prolipoprotein] + a 1,2-diacyl-sn-glycero-3-phospho-(1'-sn-glycerol) = an S-1,2-diacyl-sn-glyceryl-L-cysteinyl-[prolipoprotein] + sn-glycerol 1-phosphate + H(+)</text>
        <dbReference type="Rhea" id="RHEA:56712"/>
        <dbReference type="Rhea" id="RHEA-COMP:14679"/>
        <dbReference type="Rhea" id="RHEA-COMP:14680"/>
        <dbReference type="ChEBI" id="CHEBI:15378"/>
        <dbReference type="ChEBI" id="CHEBI:29950"/>
        <dbReference type="ChEBI" id="CHEBI:57685"/>
        <dbReference type="ChEBI" id="CHEBI:64716"/>
        <dbReference type="ChEBI" id="CHEBI:140658"/>
        <dbReference type="EC" id="2.5.1.145"/>
    </reaction>
</comment>
<comment type="pathway">
    <text evidence="1">Protein modification; lipoprotein biosynthesis (diacylglyceryl transfer).</text>
</comment>
<comment type="subcellular location">
    <subcellularLocation>
        <location evidence="1">Cell membrane</location>
        <topology evidence="1">Multi-pass membrane protein</topology>
    </subcellularLocation>
</comment>
<comment type="similarity">
    <text evidence="1">Belongs to the Lgt family.</text>
</comment>
<dbReference type="EC" id="2.5.1.145" evidence="1"/>
<dbReference type="EMBL" id="CP001129">
    <property type="protein sequence ID" value="ACG62693.1"/>
    <property type="molecule type" value="Genomic_DNA"/>
</dbReference>
<dbReference type="RefSeq" id="WP_012515956.1">
    <property type="nucleotide sequence ID" value="NC_011134.1"/>
</dbReference>
<dbReference type="SMR" id="B4U3X6"/>
<dbReference type="KEGG" id="sez:Sez_1357"/>
<dbReference type="HOGENOM" id="CLU_013386_0_1_9"/>
<dbReference type="UniPathway" id="UPA00664"/>
<dbReference type="Proteomes" id="UP000001873">
    <property type="component" value="Chromosome"/>
</dbReference>
<dbReference type="GO" id="GO:0005886">
    <property type="term" value="C:plasma membrane"/>
    <property type="evidence" value="ECO:0007669"/>
    <property type="project" value="UniProtKB-SubCell"/>
</dbReference>
<dbReference type="GO" id="GO:0008961">
    <property type="term" value="F:phosphatidylglycerol-prolipoprotein diacylglyceryl transferase activity"/>
    <property type="evidence" value="ECO:0007669"/>
    <property type="project" value="UniProtKB-UniRule"/>
</dbReference>
<dbReference type="GO" id="GO:0042158">
    <property type="term" value="P:lipoprotein biosynthetic process"/>
    <property type="evidence" value="ECO:0007669"/>
    <property type="project" value="UniProtKB-UniRule"/>
</dbReference>
<dbReference type="HAMAP" id="MF_01147">
    <property type="entry name" value="Lgt"/>
    <property type="match status" value="1"/>
</dbReference>
<dbReference type="InterPro" id="IPR001640">
    <property type="entry name" value="Lgt"/>
</dbReference>
<dbReference type="NCBIfam" id="TIGR00544">
    <property type="entry name" value="lgt"/>
    <property type="match status" value="1"/>
</dbReference>
<dbReference type="PANTHER" id="PTHR30589:SF0">
    <property type="entry name" value="PHOSPHATIDYLGLYCEROL--PROLIPOPROTEIN DIACYLGLYCERYL TRANSFERASE"/>
    <property type="match status" value="1"/>
</dbReference>
<dbReference type="PANTHER" id="PTHR30589">
    <property type="entry name" value="PROLIPOPROTEIN DIACYLGLYCERYL TRANSFERASE"/>
    <property type="match status" value="1"/>
</dbReference>
<dbReference type="Pfam" id="PF01790">
    <property type="entry name" value="LGT"/>
    <property type="match status" value="1"/>
</dbReference>
<dbReference type="PROSITE" id="PS01311">
    <property type="entry name" value="LGT"/>
    <property type="match status" value="1"/>
</dbReference>
<proteinExistence type="inferred from homology"/>
<gene>
    <name evidence="1" type="primary">lgt</name>
    <name type="ordered locus">Sez_1357</name>
</gene>
<name>LGT_STREM</name>
<accession>B4U3X6</accession>
<reference key="1">
    <citation type="journal article" date="2008" name="PLoS ONE">
        <title>Genome sequence of a lancefield group C Streptococcus zooepidemicus strain causing epidemic nephritis: new information about an old disease.</title>
        <authorList>
            <person name="Beres S.B."/>
            <person name="Sesso R."/>
            <person name="Pinto S.W.L."/>
            <person name="Hoe N.P."/>
            <person name="Porcella S.F."/>
            <person name="Deleo F.R."/>
            <person name="Musser J.M."/>
        </authorList>
    </citation>
    <scope>NUCLEOTIDE SEQUENCE [LARGE SCALE GENOMIC DNA]</scope>
    <source>
        <strain>MGCS10565</strain>
    </source>
</reference>
<sequence>MINPIAFKLGPLSLHWYAVCILVGLLLAVYLAAKEAPRKKMTSDDIIDFILIAFPLAIIGARIYYVAFEWSYYSQHLSDIFAIWNGGIAIYGGLITGTIVLFVYCYYKVLNPIHFLDIAAPSVMLAQAIGRWGNFFNQEAYGKAVSQLNYLPSFIRQQMFIDGSYRVPTFLYESMWNLIGFVIIMVWRRKPRSLLDGDILSFYLIWYGCGRLVIEGMRTDSLMLLGIRVSQYVSVLLIVIAIVFIFKRHRQKGISYYQE</sequence>